<accession>P58918</accession>
<protein>
    <recommendedName>
        <fullName evidence="4">Omega-conotoxin CVIB</fullName>
    </recommendedName>
</protein>
<comment type="function">
    <text evidence="2 3">Omega-conotoxins act at presynaptic membranes, they bind and block voltage-gated calcium channels (Cav). This toxin blocks N-, P- and Q-type calcium channels (PubMed:10938268). It shows high activities on Cav2.1/CACNA1A (IC(50)=11 nM) and Cav2.2/CACNA1B (IC(50)=7.7 nM) (PubMed:10938268). In addition, it shows a higher potency when Cav2.2/CACNA1B is only expressed with the ancillary subunit CACNB3 (IC(50)=1.6 nM) than on Cav2.2/CACNA1B expressed with the ancillary subunits CACNA2D1 and CACNB3 (IC(50)=12 nM) (PubMed:19892914). Both the Cav2.2/CACNA1B block by this toxin and the recovery are voltage-independent (PubMed:19892914). It is noteworthy that ancillary subunits beta do not modulate recovery from this toxin block, since Cav2.2/CACNA1B expressed with either the ancillary subunit CACNB2a (isoform 2a) or with CACNB3 exhibits moderate recovery (PubMed:19892914).</text>
</comment>
<comment type="subcellular location">
    <subcellularLocation>
        <location evidence="2">Secreted</location>
    </subcellularLocation>
</comment>
<comment type="tissue specificity">
    <text evidence="6">Expressed by the venom duct.</text>
</comment>
<comment type="domain">
    <text evidence="1">The presence of a 'disulfide through disulfide knot' structurally defines this protein as a knottin.</text>
</comment>
<comment type="domain">
    <text evidence="5">The cysteine framework is VI/VII (C-C-CC-C-C).</text>
</comment>
<comment type="similarity">
    <text evidence="5">Belongs to the conotoxin O1 superfamily.</text>
</comment>
<feature type="peptide" id="PRO_0000044482" description="Omega-conotoxin CVIB" evidence="2">
    <location>
        <begin position="1"/>
        <end position="25"/>
    </location>
</feature>
<feature type="modified residue" description="Cysteine amide" evidence="2">
    <location>
        <position position="25"/>
    </location>
</feature>
<feature type="disulfide bond" evidence="1">
    <location>
        <begin position="1"/>
        <end position="16"/>
    </location>
</feature>
<feature type="disulfide bond" evidence="1">
    <location>
        <begin position="8"/>
        <end position="20"/>
    </location>
</feature>
<feature type="disulfide bond" evidence="1">
    <location>
        <begin position="15"/>
        <end position="25"/>
    </location>
</feature>
<keyword id="KW-0027">Amidation</keyword>
<keyword id="KW-0108">Calcium channel impairing toxin</keyword>
<keyword id="KW-0903">Direct protein sequencing</keyword>
<keyword id="KW-1015">Disulfide bond</keyword>
<keyword id="KW-0872">Ion channel impairing toxin</keyword>
<keyword id="KW-0960">Knottin</keyword>
<keyword id="KW-0528">Neurotoxin</keyword>
<keyword id="KW-0638">Presynaptic neurotoxin</keyword>
<keyword id="KW-0964">Secreted</keyword>
<keyword id="KW-0800">Toxin</keyword>
<keyword id="KW-1218">Voltage-gated calcium channel impairing toxin</keyword>
<reference key="1">
    <citation type="journal article" date="2000" name="J. Biol. Chem.">
        <title>Novel omega-conotoxins from Conus catus discriminate among neuronal calcium channel subtypes.</title>
        <authorList>
            <person name="Lewis R.J."/>
            <person name="Nielsen K.J."/>
            <person name="Craik D.J."/>
            <person name="Loughnan M.L."/>
            <person name="Adams D.A."/>
            <person name="Sharpe I.A."/>
            <person name="Luchian T."/>
            <person name="Adams D.J."/>
            <person name="Bond T."/>
            <person name="Thomas L."/>
            <person name="Jones A."/>
            <person name="Matheson J.-L."/>
            <person name="Drinkwater R."/>
            <person name="Andrews P.R."/>
            <person name="Alewood P.F."/>
        </authorList>
    </citation>
    <scope>PROTEIN SEQUENCE</scope>
    <scope>AMIDATION AT CYS-25</scope>
    <scope>SYNTHESIS</scope>
    <scope>FUNCTION</scope>
    <scope>SUBCELLULAR LOCATION</scope>
    <source>
        <tissue>Venom</tissue>
    </source>
</reference>
<reference key="2">
    <citation type="journal article" date="2010" name="Mol. Pharmacol.">
        <title>Analgesic (omega)-conotoxins CVIE and CVIF selectively and voltage-dependently block recombinant and native N-type calcium channels.</title>
        <authorList>
            <person name="Berecki G."/>
            <person name="Motin L."/>
            <person name="Haythornthwaite A."/>
            <person name="Vink S."/>
            <person name="Bansal P."/>
            <person name="Drinkwater R."/>
            <person name="Wang C.I."/>
            <person name="Moretta M."/>
            <person name="Lewis R.J."/>
            <person name="Alewood P.F."/>
            <person name="Christie M.J."/>
            <person name="Adams D.J."/>
        </authorList>
    </citation>
    <scope>FUNCTION</scope>
    <scope>SYNTHESIS</scope>
</reference>
<reference key="3">
    <citation type="journal article" date="2011" name="Mol. Pharmacol.">
        <title>Correction to 'Analgesic omega-Conotoxins CVIE and CVIF Selectively and Voltage-Dependently Block Recombinant and Native N-Type Calcium Channels'.</title>
        <authorList>
            <person name="Berecki G."/>
            <person name="Motin L."/>
            <person name="Haythornthwaite A."/>
            <person name="Vink S."/>
            <person name="Bansal P."/>
            <person name="Drinkwater R."/>
            <person name="Wang C.I."/>
            <person name="Moretta M."/>
            <person name="Lewis R.J."/>
            <person name="Alewood P.F."/>
            <person name="Christie M.J."/>
            <person name="Adams D.J."/>
        </authorList>
    </citation>
    <scope>ERRATUM OF PUBMED:19892914</scope>
</reference>
<dbReference type="SMR" id="P58918"/>
<dbReference type="ConoServer" id="1726">
    <property type="toxin name" value="CVIB"/>
</dbReference>
<dbReference type="GO" id="GO:0005576">
    <property type="term" value="C:extracellular region"/>
    <property type="evidence" value="ECO:0007669"/>
    <property type="project" value="UniProtKB-SubCell"/>
</dbReference>
<dbReference type="GO" id="GO:0044231">
    <property type="term" value="C:host cell presynaptic membrane"/>
    <property type="evidence" value="ECO:0007669"/>
    <property type="project" value="UniProtKB-KW"/>
</dbReference>
<dbReference type="GO" id="GO:0005246">
    <property type="term" value="F:calcium channel regulator activity"/>
    <property type="evidence" value="ECO:0007669"/>
    <property type="project" value="UniProtKB-KW"/>
</dbReference>
<dbReference type="GO" id="GO:0008200">
    <property type="term" value="F:ion channel inhibitor activity"/>
    <property type="evidence" value="ECO:0007669"/>
    <property type="project" value="InterPro"/>
</dbReference>
<dbReference type="GO" id="GO:0090729">
    <property type="term" value="F:toxin activity"/>
    <property type="evidence" value="ECO:0007669"/>
    <property type="project" value="UniProtKB-KW"/>
</dbReference>
<dbReference type="InterPro" id="IPR012321">
    <property type="entry name" value="Conotoxin_omega-typ_CS"/>
</dbReference>
<dbReference type="SUPFAM" id="SSF57059">
    <property type="entry name" value="omega toxin-like"/>
    <property type="match status" value="1"/>
</dbReference>
<dbReference type="PROSITE" id="PS60004">
    <property type="entry name" value="OMEGA_CONOTOXIN"/>
    <property type="match status" value="1"/>
</dbReference>
<organism>
    <name type="scientific">Conus catus</name>
    <name type="common">Cat cone</name>
    <dbReference type="NCBI Taxonomy" id="101291"/>
    <lineage>
        <taxon>Eukaryota</taxon>
        <taxon>Metazoa</taxon>
        <taxon>Spiralia</taxon>
        <taxon>Lophotrochozoa</taxon>
        <taxon>Mollusca</taxon>
        <taxon>Gastropoda</taxon>
        <taxon>Caenogastropoda</taxon>
        <taxon>Neogastropoda</taxon>
        <taxon>Conoidea</taxon>
        <taxon>Conidae</taxon>
        <taxon>Conus</taxon>
        <taxon>Pionoconus</taxon>
    </lineage>
</organism>
<name>O16B_CONCT</name>
<proteinExistence type="evidence at protein level"/>
<evidence type="ECO:0000250" key="1">
    <source>
        <dbReference type="UniProtKB" id="P05484"/>
    </source>
</evidence>
<evidence type="ECO:0000269" key="2">
    <source>
    </source>
</evidence>
<evidence type="ECO:0000269" key="3">
    <source>
    </source>
</evidence>
<evidence type="ECO:0000303" key="4">
    <source>
    </source>
</evidence>
<evidence type="ECO:0000305" key="5"/>
<evidence type="ECO:0000305" key="6">
    <source>
    </source>
</evidence>
<sequence length="25" mass="2717">CKGKGASCRKTMYDCCRGSCRSGRC</sequence>